<protein>
    <recommendedName>
        <fullName>TBCC domain-containing protein 1</fullName>
    </recommendedName>
</protein>
<accession>Q08AV6</accession>
<sequence length="547" mass="62653">MDGSRVQLWAKTDPFLLGALQMPPPAKFSMHYLRKMASYVRTRATEGCYPRLYWAMWRHIACGKLQIVEETAWLYFETFLSVFERSVAQSLDWAEVASTCPSSEKYEEIKSQLSVDTLKFILFLYIQQINKISLRAPMIESEWPSPRSRSPTPDFVAQSSIYNKVWDDYSHYNFIHNHLTYILELLMEPKQLSIVTQSSHCILISAEVVNALGFLIEGTVDKNRAVNHFLDLAVWQPVQIKSGFIETSGAFSFQKLQAWIKECLVINPFGITACIKSGTKLSWAQQVDGLNKRAKVACNTYKVPHTHRMVVMSQISKQTLAKSSKTLVDARVKIHRCSDCYIYLLSPLRSVTVEKCQNCTIILGPVQTVLHIQMCYNVKIIAVCQRLSLLSTTNCTFHILTPTRPLFYCGNQGAVLAPFHIRYSMLEDHMAQTGLATVPNSWDRPFLFSTESNNSNIWRLMPPEDFFTFVVPFEMEGDTTEIPGGLPPAYSNSVQQRQQKIHTWQKTVKDAGLTREQRKQFQAVVEMKFNEWLSKTENRHQLDSLVS</sequence>
<comment type="function">
    <text evidence="1">May play a role in the regulation of centrosome and Golgi apparatus positioning.</text>
</comment>
<comment type="subcellular location">
    <subcellularLocation>
        <location evidence="1">Cytoplasm</location>
        <location evidence="1">Cytoskeleton</location>
        <location evidence="1">Microtubule organizing center</location>
        <location evidence="1">Centrosome</location>
    </subcellularLocation>
    <subcellularLocation>
        <location evidence="1">Cytoplasm</location>
        <location evidence="1">Cytoskeleton</location>
        <location evidence="1">Spindle pole</location>
    </subcellularLocation>
</comment>
<comment type="similarity">
    <text evidence="3">Belongs to the TBCC family.</text>
</comment>
<keyword id="KW-0963">Cytoplasm</keyword>
<keyword id="KW-0206">Cytoskeleton</keyword>
<keyword id="KW-1185">Reference proteome</keyword>
<name>TBCC1_XENLA</name>
<reference key="1">
    <citation type="submission" date="2006-10" db="EMBL/GenBank/DDBJ databases">
        <authorList>
            <consortium name="NIH - Xenopus Gene Collection (XGC) project"/>
        </authorList>
    </citation>
    <scope>NUCLEOTIDE SEQUENCE [LARGE SCALE MRNA]</scope>
    <source>
        <tissue>Ovary</tissue>
    </source>
</reference>
<gene>
    <name type="primary">tbccd1</name>
</gene>
<proteinExistence type="evidence at transcript level"/>
<organism>
    <name type="scientific">Xenopus laevis</name>
    <name type="common">African clawed frog</name>
    <dbReference type="NCBI Taxonomy" id="8355"/>
    <lineage>
        <taxon>Eukaryota</taxon>
        <taxon>Metazoa</taxon>
        <taxon>Chordata</taxon>
        <taxon>Craniata</taxon>
        <taxon>Vertebrata</taxon>
        <taxon>Euteleostomi</taxon>
        <taxon>Amphibia</taxon>
        <taxon>Batrachia</taxon>
        <taxon>Anura</taxon>
        <taxon>Pipoidea</taxon>
        <taxon>Pipidae</taxon>
        <taxon>Xenopodinae</taxon>
        <taxon>Xenopus</taxon>
        <taxon>Xenopus</taxon>
    </lineage>
</organism>
<evidence type="ECO:0000250" key="1"/>
<evidence type="ECO:0000255" key="2">
    <source>
        <dbReference type="PROSITE-ProRule" id="PRU00659"/>
    </source>
</evidence>
<evidence type="ECO:0000305" key="3"/>
<dbReference type="EMBL" id="BC124991">
    <property type="protein sequence ID" value="AAI24992.1"/>
    <property type="molecule type" value="mRNA"/>
</dbReference>
<dbReference type="RefSeq" id="NP_001121322.1">
    <property type="nucleotide sequence ID" value="NM_001127850.1"/>
</dbReference>
<dbReference type="SMR" id="Q08AV6"/>
<dbReference type="BioGRID" id="932727">
    <property type="interactions" value="1"/>
</dbReference>
<dbReference type="IntAct" id="Q08AV6">
    <property type="interactions" value="1"/>
</dbReference>
<dbReference type="DNASU" id="100158407"/>
<dbReference type="GeneID" id="100158407"/>
<dbReference type="KEGG" id="xla:100158407"/>
<dbReference type="AGR" id="Xenbase:XB-GENE-6252749"/>
<dbReference type="CTD" id="100158407"/>
<dbReference type="Xenbase" id="XB-GENE-6252749">
    <property type="gene designation" value="tbccd1.L"/>
</dbReference>
<dbReference type="OMA" id="VPNAWDQ"/>
<dbReference type="OrthoDB" id="427777at2759"/>
<dbReference type="Proteomes" id="UP000186698">
    <property type="component" value="Chromosome 9_10L"/>
</dbReference>
<dbReference type="Bgee" id="100158407">
    <property type="expression patterns" value="Expressed in testis and 19 other cell types or tissues"/>
</dbReference>
<dbReference type="GO" id="GO:0005737">
    <property type="term" value="C:cytoplasm"/>
    <property type="evidence" value="ECO:0007669"/>
    <property type="project" value="UniProtKB-KW"/>
</dbReference>
<dbReference type="GO" id="GO:0031616">
    <property type="term" value="C:spindle pole centrosome"/>
    <property type="evidence" value="ECO:0000318"/>
    <property type="project" value="GO_Central"/>
</dbReference>
<dbReference type="GO" id="GO:0051661">
    <property type="term" value="P:maintenance of centrosome location"/>
    <property type="evidence" value="ECO:0000318"/>
    <property type="project" value="GO_Central"/>
</dbReference>
<dbReference type="GO" id="GO:0051684">
    <property type="term" value="P:maintenance of Golgi location"/>
    <property type="evidence" value="ECO:0000318"/>
    <property type="project" value="GO_Central"/>
</dbReference>
<dbReference type="Gene3D" id="2.160.20.70">
    <property type="match status" value="1"/>
</dbReference>
<dbReference type="InterPro" id="IPR017901">
    <property type="entry name" value="C-CAP_CF_C-like"/>
</dbReference>
<dbReference type="InterPro" id="IPR016098">
    <property type="entry name" value="CAP/MinC_C"/>
</dbReference>
<dbReference type="InterPro" id="IPR036223">
    <property type="entry name" value="CAP_C_sf"/>
</dbReference>
<dbReference type="InterPro" id="IPR006599">
    <property type="entry name" value="CARP_motif"/>
</dbReference>
<dbReference type="InterPro" id="IPR039589">
    <property type="entry name" value="TBCC1"/>
</dbReference>
<dbReference type="InterPro" id="IPR012945">
    <property type="entry name" value="Tubulin-bd_cofactor_C_dom"/>
</dbReference>
<dbReference type="PANTHER" id="PTHR16052">
    <property type="entry name" value="TBCC DOMAIN-CONTAINING PROTEIN 1"/>
    <property type="match status" value="1"/>
</dbReference>
<dbReference type="PANTHER" id="PTHR16052:SF0">
    <property type="entry name" value="TBCC DOMAIN-CONTAINING PROTEIN 1"/>
    <property type="match status" value="1"/>
</dbReference>
<dbReference type="Pfam" id="PF07986">
    <property type="entry name" value="TBCC"/>
    <property type="match status" value="1"/>
</dbReference>
<dbReference type="SMART" id="SM00673">
    <property type="entry name" value="CARP"/>
    <property type="match status" value="2"/>
</dbReference>
<dbReference type="SUPFAM" id="SSF69340">
    <property type="entry name" value="C-terminal domain of adenylylcyclase associated protein"/>
    <property type="match status" value="1"/>
</dbReference>
<dbReference type="PROSITE" id="PS51329">
    <property type="entry name" value="C_CAP_COFACTOR_C"/>
    <property type="match status" value="1"/>
</dbReference>
<feature type="chain" id="PRO_0000304949" description="TBCC domain-containing protein 1">
    <location>
        <begin position="1"/>
        <end position="547"/>
    </location>
</feature>
<feature type="domain" description="C-CAP/cofactor C-like" evidence="2">
    <location>
        <begin position="304"/>
        <end position="435"/>
    </location>
</feature>